<organism>
    <name type="scientific">Anemonia sulcata</name>
    <name type="common">Mediterranean snakelocks sea anemone</name>
    <dbReference type="NCBI Taxonomy" id="6108"/>
    <lineage>
        <taxon>Eukaryota</taxon>
        <taxon>Metazoa</taxon>
        <taxon>Cnidaria</taxon>
        <taxon>Anthozoa</taxon>
        <taxon>Hexacorallia</taxon>
        <taxon>Actiniaria</taxon>
        <taxon>Actiniidae</taxon>
        <taxon>Anemonia</taxon>
    </lineage>
</organism>
<sequence>ACKDNFAAATCKHVKENKNCGSQKYATNCAKTCGKC</sequence>
<evidence type="ECO:0000250" key="1"/>
<evidence type="ECO:0000250" key="2">
    <source>
        <dbReference type="UniProtKB" id="P29186"/>
    </source>
</evidence>
<evidence type="ECO:0000255" key="3">
    <source>
        <dbReference type="PROSITE-ProRule" id="PRU01005"/>
    </source>
</evidence>
<evidence type="ECO:0000269" key="4">
    <source>
    </source>
</evidence>
<evidence type="ECO:0000303" key="5">
    <source>
    </source>
</evidence>
<evidence type="ECO:0000303" key="6">
    <source>
    </source>
</evidence>
<evidence type="ECO:0000305" key="7"/>
<evidence type="ECO:0000305" key="8">
    <source>
    </source>
</evidence>
<keyword id="KW-0903">Direct protein sequencing</keyword>
<keyword id="KW-1015">Disulfide bond</keyword>
<keyword id="KW-0872">Ion channel impairing toxin</keyword>
<keyword id="KW-0166">Nematocyst</keyword>
<keyword id="KW-0528">Neurotoxin</keyword>
<keyword id="KW-0632">Potassium channel impairing toxin</keyword>
<keyword id="KW-0964">Secreted</keyword>
<keyword id="KW-0800">Toxin</keyword>
<keyword id="KW-1220">Voltage-gated potassium channel impairing toxin</keyword>
<dbReference type="SMR" id="Q9TWG1"/>
<dbReference type="GO" id="GO:0005576">
    <property type="term" value="C:extracellular region"/>
    <property type="evidence" value="ECO:0007669"/>
    <property type="project" value="UniProtKB-SubCell"/>
</dbReference>
<dbReference type="GO" id="GO:0042151">
    <property type="term" value="C:nematocyst"/>
    <property type="evidence" value="ECO:0007669"/>
    <property type="project" value="UniProtKB-SubCell"/>
</dbReference>
<dbReference type="GO" id="GO:0015459">
    <property type="term" value="F:potassium channel regulator activity"/>
    <property type="evidence" value="ECO:0007669"/>
    <property type="project" value="UniProtKB-KW"/>
</dbReference>
<dbReference type="GO" id="GO:0090729">
    <property type="term" value="F:toxin activity"/>
    <property type="evidence" value="ECO:0007669"/>
    <property type="project" value="UniProtKB-KW"/>
</dbReference>
<dbReference type="InterPro" id="IPR003582">
    <property type="entry name" value="ShKT_dom"/>
</dbReference>
<dbReference type="Pfam" id="PF01549">
    <property type="entry name" value="ShK"/>
    <property type="match status" value="1"/>
</dbReference>
<dbReference type="SUPFAM" id="SSF57546">
    <property type="entry name" value="Crisp domain-like"/>
    <property type="match status" value="1"/>
</dbReference>
<dbReference type="PROSITE" id="PS51670">
    <property type="entry name" value="SHKT"/>
    <property type="match status" value="1"/>
</dbReference>
<proteinExistence type="evidence at protein level"/>
<accession>Q9TWG1</accession>
<comment type="function">
    <text evidence="4">Blocks voltage-gated potassium channels Kv1.2/KCNA2 (IC(50)=140 nM).</text>
</comment>
<comment type="subcellular location">
    <subcellularLocation>
        <location evidence="8">Secreted</location>
    </subcellularLocation>
    <subcellularLocation>
        <location evidence="7">Nematocyst</location>
    </subcellularLocation>
</comment>
<comment type="similarity">
    <text evidence="7">Belongs to the sea anemone type 1 potassium channel toxin family. Type 1b subfamily.</text>
</comment>
<comment type="caution">
    <text evidence="7">Opinions are divided on whether Anemonia viridis (Forsskal, 1775) and Anemonia sulcata (Pennant, 1777) are separate species.</text>
</comment>
<feature type="peptide" id="PRO_0000044865" description="Kappa-actitoxin-Avd6a" evidence="4">
    <location>
        <begin position="1"/>
        <end position="36"/>
    </location>
</feature>
<feature type="domain" description="ShKT" evidence="3">
    <location>
        <begin position="2"/>
        <end position="36"/>
    </location>
</feature>
<feature type="region of interest" description="Crucial for binding to potassium channels" evidence="2">
    <location>
        <begin position="24"/>
        <end position="25"/>
    </location>
</feature>
<feature type="site" description="Important for binding to potassium channels" evidence="1">
    <location>
        <position position="6"/>
    </location>
</feature>
<feature type="site" description="Important for binding to potassium channels" evidence="1">
    <location>
        <position position="13"/>
    </location>
</feature>
<feature type="site" description="Important for binding to potassium channels" evidence="1">
    <location>
        <position position="22"/>
    </location>
</feature>
<feature type="disulfide bond" evidence="3">
    <location>
        <begin position="2"/>
        <end position="36"/>
    </location>
</feature>
<feature type="disulfide bond" evidence="3">
    <location>
        <begin position="11"/>
        <end position="29"/>
    </location>
</feature>
<feature type="disulfide bond" evidence="3">
    <location>
        <begin position="20"/>
        <end position="33"/>
    </location>
</feature>
<reference key="1">
    <citation type="journal article" date="1995" name="J. Biol. Chem.">
        <title>Kalicludines and kaliseptine. Two different classes of sea anemone toxins for voltage sensitive K+ channels.</title>
        <authorList>
            <person name="Schweitz H."/>
            <person name="Bruhn T."/>
            <person name="Guillemare E."/>
            <person name="Moinier D."/>
            <person name="Lancelin J.-M."/>
            <person name="Beress L."/>
            <person name="Lazdunski M."/>
        </authorList>
    </citation>
    <scope>PROTEIN SEQUENCE</scope>
    <scope>FUNCTION</scope>
</reference>
<reference key="2">
    <citation type="journal article" date="2012" name="Toxicon">
        <title>Development of a rational nomenclature for naming peptide and protein toxins from sea anemones.</title>
        <authorList>
            <person name="Oliveira J.S."/>
            <person name="Fuentes-Silva D."/>
            <person name="King G.F."/>
        </authorList>
    </citation>
    <scope>NOMENCLATURE</scope>
</reference>
<protein>
    <recommendedName>
        <fullName evidence="5">Kappa-actitoxin-Avd6a</fullName>
        <shortName evidence="5">Kappa-AITX-Avd6a</shortName>
    </recommendedName>
    <alternativeName>
        <fullName evidence="6">Kaliseptine</fullName>
        <shortName evidence="6">AsKS</shortName>
    </alternativeName>
</protein>
<name>K1B_ANESU</name>